<proteinExistence type="evidence at transcript level"/>
<feature type="signal peptide" evidence="4">
    <location>
        <begin position="1"/>
        <end position="18"/>
    </location>
</feature>
<feature type="chain" id="PRO_0000028468" description="Haptoglobin">
    <location>
        <begin position="19"/>
        <end position="347"/>
    </location>
</feature>
<feature type="chain" id="PRO_0000028469" description="Haptoglobin alpha chain">
    <location>
        <begin position="19"/>
        <end position="101"/>
    </location>
</feature>
<feature type="chain" id="PRO_0000028470" description="Haptoglobin beta chain">
    <location>
        <begin position="103"/>
        <end position="347"/>
    </location>
</feature>
<feature type="domain" description="Sushi" evidence="6">
    <location>
        <begin position="31"/>
        <end position="88"/>
    </location>
</feature>
<feature type="domain" description="Peptidase S1" evidence="5">
    <location>
        <begin position="103"/>
        <end position="345"/>
    </location>
</feature>
<feature type="region of interest" description="Interaction with CD163" evidence="1">
    <location>
        <begin position="259"/>
        <end position="264"/>
    </location>
</feature>
<feature type="glycosylation site" description="N-linked (GlcNAc...) asparagine" evidence="4">
    <location>
        <position position="148"/>
    </location>
</feature>
<feature type="glycosylation site" description="N-linked (GlcNAc...) asparagine" evidence="4">
    <location>
        <position position="182"/>
    </location>
</feature>
<feature type="glycosylation site" description="N-linked (GlcNAc...) asparagine" evidence="4">
    <location>
        <position position="256"/>
    </location>
</feature>
<feature type="glycosylation site" description="N-linked (GlcNAc...) asparagine" evidence="4">
    <location>
        <position position="264"/>
    </location>
</feature>
<feature type="disulfide bond" description="Interchain" evidence="1">
    <location>
        <position position="33"/>
    </location>
</feature>
<feature type="disulfide bond" evidence="1">
    <location>
        <begin position="52"/>
        <end position="86"/>
    </location>
</feature>
<feature type="disulfide bond" description="Interchain (between alpha and beta chains)" evidence="5 6">
    <location>
        <begin position="90"/>
        <end position="207"/>
    </location>
</feature>
<feature type="disulfide bond" evidence="1">
    <location>
        <begin position="250"/>
        <end position="281"/>
    </location>
</feature>
<feature type="disulfide bond" evidence="1">
    <location>
        <begin position="292"/>
        <end position="322"/>
    </location>
</feature>
<accession>Q62558</accession>
<comment type="function">
    <text evidence="1">As a result of hemolysis, hemoglobin is found to accumulate in the kidney and is secreted in the urine. Haptoglobin captures, and combines with free plasma hemoglobin to allow hepatic recycling of heme iron and to prevent kidney damage. Haptoglobin also acts as an antioxidant, has antibacterial activity and plays a role in modulating many aspects of the acute phase response. Hemoglobin/haptoglobin complexes are rapidly cleared by the macrophage CD163 scavenger receptor expressed on the surface of liver Kupfer cells through an endocytic lysosomal degradation pathway (By similarity).</text>
</comment>
<comment type="subunit">
    <text evidence="2 3">Tetramer of two alpha and two beta chains; disulfide-linked (By similarity). The hemoglobin/haptoglobin complex is composed of a haptoglobin dimer bound to two hemoglobin alpha-beta dimers (By similarity). Interacts with CD163 (By similarity). Interacts with ERGIC3 (By similarity).</text>
</comment>
<comment type="subcellular location">
    <subcellularLocation>
        <location evidence="1">Secreted</location>
    </subcellularLocation>
</comment>
<comment type="tissue specificity">
    <text>Expressed by the liver and secreted in plasma.</text>
</comment>
<comment type="domain">
    <text evidence="1">The beta chain mediates most of the interactions with both subunits of hemoglobin, while the alpha chain forms the homodimeric interface.</text>
</comment>
<comment type="similarity">
    <text evidence="5">Belongs to the peptidase S1 family.</text>
</comment>
<comment type="caution">
    <text evidence="7">Although homologous to serine proteases, it has lost all essential catalytic residues and has no enzymatic activity.</text>
</comment>
<protein>
    <recommendedName>
        <fullName>Haptoglobin</fullName>
    </recommendedName>
    <component>
        <recommendedName>
            <fullName>Haptoglobin alpha chain</fullName>
        </recommendedName>
    </component>
    <component>
        <recommendedName>
            <fullName>Haptoglobin beta chain</fullName>
        </recommendedName>
    </component>
</protein>
<reference key="1">
    <citation type="submission" date="1997-05" db="EMBL/GenBank/DDBJ databases">
        <title>Evolution of mouse haptoglobin genes.</title>
        <authorList>
            <person name="Pajovic S."/>
            <person name="Jones V.E."/>
            <person name="Prowse K.R."/>
            <person name="Berger F.G."/>
            <person name="Baumann H."/>
        </authorList>
    </citation>
    <scope>NUCLEOTIDE SEQUENCE [MRNA]</scope>
    <source>
        <tissue>Liver</tissue>
    </source>
</reference>
<sequence>MRALGAVVTLLLWGQLFAAELGNDAMDFEDDSCPKPPEIANGYVEHLVRYRCRQFYRLRTEGDGVYTLNDEKQWVNTAAGEKLPECEAVCGKPKHPVVQVQRIIGGSMDAKGSFPWQAKMISRHGLTTGATLISDQWLLTTAKNLFLNHSETASAKDIAPTLTLYVGKNQLVEIEKVVLHPNHSVVDIGLIKLKQRVLVTERVMPICLPSKDYVAPGRVGYLSGWGRNVNFRFTERFKYVMLPVADQDKCVVHYENSTVPEKKNFTSPVGVQPILNEHTFCVGLSRYQEDTCYGDAGSAFAIHDMEEDTWXAAGILSFDKSCAVAEYGVYVRATDLKDWVQETMAKK</sequence>
<keyword id="KW-0011">Acute phase</keyword>
<keyword id="KW-0044">Antibiotic</keyword>
<keyword id="KW-0929">Antimicrobial</keyword>
<keyword id="KW-0049">Antioxidant</keyword>
<keyword id="KW-1015">Disulfide bond</keyword>
<keyword id="KW-0325">Glycoprotein</keyword>
<keyword id="KW-0351">Hemoglobin-binding</keyword>
<keyword id="KW-0391">Immunity</keyword>
<keyword id="KW-0964">Secreted</keyword>
<keyword id="KW-0721">Serine protease homolog</keyword>
<keyword id="KW-0732">Signal</keyword>
<keyword id="KW-0768">Sushi</keyword>
<gene>
    <name type="primary">Hp</name>
</gene>
<dbReference type="EMBL" id="L10353">
    <property type="protein sequence ID" value="AAB65440.1"/>
    <property type="molecule type" value="mRNA"/>
</dbReference>
<dbReference type="MEROPS" id="S01.972"/>
<dbReference type="GlyCosmos" id="Q62558">
    <property type="glycosylation" value="4 sites, No reported glycans"/>
</dbReference>
<dbReference type="GO" id="GO:0072562">
    <property type="term" value="C:blood microparticle"/>
    <property type="evidence" value="ECO:0007669"/>
    <property type="project" value="TreeGrafter"/>
</dbReference>
<dbReference type="GO" id="GO:0016209">
    <property type="term" value="F:antioxidant activity"/>
    <property type="evidence" value="ECO:0007669"/>
    <property type="project" value="UniProtKB-KW"/>
</dbReference>
<dbReference type="GO" id="GO:0030492">
    <property type="term" value="F:hemoglobin binding"/>
    <property type="evidence" value="ECO:0007669"/>
    <property type="project" value="UniProtKB-KW"/>
</dbReference>
<dbReference type="GO" id="GO:0006953">
    <property type="term" value="P:acute-phase response"/>
    <property type="evidence" value="ECO:0007669"/>
    <property type="project" value="UniProtKB-KW"/>
</dbReference>
<dbReference type="GO" id="GO:0042742">
    <property type="term" value="P:defense response to bacterium"/>
    <property type="evidence" value="ECO:0007669"/>
    <property type="project" value="UniProtKB-KW"/>
</dbReference>
<dbReference type="GO" id="GO:0002376">
    <property type="term" value="P:immune system process"/>
    <property type="evidence" value="ECO:0007669"/>
    <property type="project" value="UniProtKB-KW"/>
</dbReference>
<dbReference type="CDD" id="cd00033">
    <property type="entry name" value="CCP"/>
    <property type="match status" value="1"/>
</dbReference>
<dbReference type="CDD" id="cd00190">
    <property type="entry name" value="Tryp_SPc"/>
    <property type="match status" value="1"/>
</dbReference>
<dbReference type="FunFam" id="2.10.70.10:FF:000048">
    <property type="entry name" value="Haptoglobin"/>
    <property type="match status" value="1"/>
</dbReference>
<dbReference type="FunFam" id="2.40.10.10:FF:000027">
    <property type="entry name" value="Haptoglobin"/>
    <property type="match status" value="1"/>
</dbReference>
<dbReference type="FunFam" id="2.40.10.10:FF:000031">
    <property type="entry name" value="Haptoglobin"/>
    <property type="match status" value="1"/>
</dbReference>
<dbReference type="Gene3D" id="2.10.70.10">
    <property type="entry name" value="Complement Module, domain 1"/>
    <property type="match status" value="1"/>
</dbReference>
<dbReference type="Gene3D" id="2.40.10.10">
    <property type="entry name" value="Trypsin-like serine proteases"/>
    <property type="match status" value="2"/>
</dbReference>
<dbReference type="InterPro" id="IPR008292">
    <property type="entry name" value="Haptoglobin"/>
</dbReference>
<dbReference type="InterPro" id="IPR009003">
    <property type="entry name" value="Peptidase_S1_PA"/>
</dbReference>
<dbReference type="InterPro" id="IPR043504">
    <property type="entry name" value="Peptidase_S1_PA_chymotrypsin"/>
</dbReference>
<dbReference type="InterPro" id="IPR001314">
    <property type="entry name" value="Peptidase_S1A"/>
</dbReference>
<dbReference type="InterPro" id="IPR035976">
    <property type="entry name" value="Sushi/SCR/CCP_sf"/>
</dbReference>
<dbReference type="InterPro" id="IPR000436">
    <property type="entry name" value="Sushi_SCR_CCP_dom"/>
</dbReference>
<dbReference type="InterPro" id="IPR001254">
    <property type="entry name" value="Trypsin_dom"/>
</dbReference>
<dbReference type="PANTHER" id="PTHR24255">
    <property type="entry name" value="COMPLEMENT COMPONENT 1, S SUBCOMPONENT-RELATED"/>
    <property type="match status" value="1"/>
</dbReference>
<dbReference type="PANTHER" id="PTHR24255:SF27">
    <property type="entry name" value="HAPTOGLOBIN-RELATED PROTEIN"/>
    <property type="match status" value="1"/>
</dbReference>
<dbReference type="Pfam" id="PF00089">
    <property type="entry name" value="Trypsin"/>
    <property type="match status" value="1"/>
</dbReference>
<dbReference type="PIRSF" id="PIRSF001137">
    <property type="entry name" value="Haptoglobin"/>
    <property type="match status" value="1"/>
</dbReference>
<dbReference type="PRINTS" id="PR00722">
    <property type="entry name" value="CHYMOTRYPSIN"/>
</dbReference>
<dbReference type="SMART" id="SM00020">
    <property type="entry name" value="Tryp_SPc"/>
    <property type="match status" value="1"/>
</dbReference>
<dbReference type="SUPFAM" id="SSF57535">
    <property type="entry name" value="Complement control module/SCR domain"/>
    <property type="match status" value="1"/>
</dbReference>
<dbReference type="SUPFAM" id="SSF50494">
    <property type="entry name" value="Trypsin-like serine proteases"/>
    <property type="match status" value="1"/>
</dbReference>
<dbReference type="PROSITE" id="PS50923">
    <property type="entry name" value="SUSHI"/>
    <property type="match status" value="1"/>
</dbReference>
<dbReference type="PROSITE" id="PS50240">
    <property type="entry name" value="TRYPSIN_DOM"/>
    <property type="match status" value="1"/>
</dbReference>
<evidence type="ECO:0000250" key="1"/>
<evidence type="ECO:0000250" key="2">
    <source>
        <dbReference type="UniProtKB" id="P00738"/>
    </source>
</evidence>
<evidence type="ECO:0000250" key="3">
    <source>
        <dbReference type="UniProtKB" id="Q8SPS7"/>
    </source>
</evidence>
<evidence type="ECO:0000255" key="4"/>
<evidence type="ECO:0000255" key="5">
    <source>
        <dbReference type="PROSITE-ProRule" id="PRU00274"/>
    </source>
</evidence>
<evidence type="ECO:0000255" key="6">
    <source>
        <dbReference type="PROSITE-ProRule" id="PRU00302"/>
    </source>
</evidence>
<evidence type="ECO:0000305" key="7"/>
<name>HPT_MUSSA</name>
<organism>
    <name type="scientific">Mus saxicola</name>
    <name type="common">Brown spiny mouse</name>
    <name type="synonym">Rock-loving mouse</name>
    <dbReference type="NCBI Taxonomy" id="10094"/>
    <lineage>
        <taxon>Eukaryota</taxon>
        <taxon>Metazoa</taxon>
        <taxon>Chordata</taxon>
        <taxon>Craniata</taxon>
        <taxon>Vertebrata</taxon>
        <taxon>Euteleostomi</taxon>
        <taxon>Mammalia</taxon>
        <taxon>Eutheria</taxon>
        <taxon>Euarchontoglires</taxon>
        <taxon>Glires</taxon>
        <taxon>Rodentia</taxon>
        <taxon>Myomorpha</taxon>
        <taxon>Muroidea</taxon>
        <taxon>Muridae</taxon>
        <taxon>Murinae</taxon>
        <taxon>Mus</taxon>
        <taxon>Pyromys</taxon>
    </lineage>
</organism>